<evidence type="ECO:0000250" key="1"/>
<evidence type="ECO:0000250" key="2">
    <source>
        <dbReference type="UniProtKB" id="P0A8T7"/>
    </source>
</evidence>
<evidence type="ECO:0000305" key="3"/>
<comment type="function">
    <text evidence="1">DNA-dependent RNA polymerase catalyzes the transcription of DNA into RNA using the four ribonucleoside triphosphates as substrates.</text>
</comment>
<comment type="catalytic activity">
    <reaction evidence="2">
        <text>RNA(n) + a ribonucleoside 5'-triphosphate = RNA(n+1) + diphosphate</text>
        <dbReference type="Rhea" id="RHEA:21248"/>
        <dbReference type="Rhea" id="RHEA-COMP:14527"/>
        <dbReference type="Rhea" id="RHEA-COMP:17342"/>
        <dbReference type="ChEBI" id="CHEBI:33019"/>
        <dbReference type="ChEBI" id="CHEBI:61557"/>
        <dbReference type="ChEBI" id="CHEBI:140395"/>
        <dbReference type="EC" id="2.7.7.6"/>
    </reaction>
</comment>
<comment type="cofactor">
    <cofactor evidence="2">
        <name>Zn(2+)</name>
        <dbReference type="ChEBI" id="CHEBI:29105"/>
    </cofactor>
    <text evidence="2">Binds 1 Zn(2+) ion per subunit.</text>
</comment>
<comment type="subunit">
    <text evidence="1">In cyanobacteria the RNAP catalytic core is composed of 2 alpha, 1 beta, 1 beta', 1 gamma and 1 omega subunit. When a sigma factor is associated with the core the holoenzyme is formed, which can initiate transcription (By similarity).</text>
</comment>
<comment type="similarity">
    <text evidence="3">Belongs to the RNA polymerase beta' chain family. RpoC1 subfamily.</text>
</comment>
<dbReference type="EC" id="2.7.7.6"/>
<dbReference type="EMBL" id="Z11154">
    <property type="protein sequence ID" value="CAA77505.1"/>
    <property type="molecule type" value="Genomic_DNA"/>
</dbReference>
<dbReference type="PIR" id="S20584">
    <property type="entry name" value="S20584"/>
</dbReference>
<dbReference type="SMR" id="P42075"/>
<dbReference type="GO" id="GO:0000428">
    <property type="term" value="C:DNA-directed RNA polymerase complex"/>
    <property type="evidence" value="ECO:0007669"/>
    <property type="project" value="UniProtKB-KW"/>
</dbReference>
<dbReference type="GO" id="GO:0003677">
    <property type="term" value="F:DNA binding"/>
    <property type="evidence" value="ECO:0007669"/>
    <property type="project" value="InterPro"/>
</dbReference>
<dbReference type="GO" id="GO:0003899">
    <property type="term" value="F:DNA-directed RNA polymerase activity"/>
    <property type="evidence" value="ECO:0007669"/>
    <property type="project" value="UniProtKB-EC"/>
</dbReference>
<dbReference type="GO" id="GO:0046872">
    <property type="term" value="F:metal ion binding"/>
    <property type="evidence" value="ECO:0007669"/>
    <property type="project" value="UniProtKB-KW"/>
</dbReference>
<dbReference type="GO" id="GO:0006351">
    <property type="term" value="P:DNA-templated transcription"/>
    <property type="evidence" value="ECO:0007669"/>
    <property type="project" value="InterPro"/>
</dbReference>
<dbReference type="Gene3D" id="4.10.860.120">
    <property type="entry name" value="RNA polymerase II, clamp domain"/>
    <property type="match status" value="1"/>
</dbReference>
<dbReference type="InterPro" id="IPR045867">
    <property type="entry name" value="DNA-dir_RpoC_beta_prime"/>
</dbReference>
<dbReference type="InterPro" id="IPR007080">
    <property type="entry name" value="RNA_pol_Rpb1_1"/>
</dbReference>
<dbReference type="InterPro" id="IPR044893">
    <property type="entry name" value="RNA_pol_Rpb1_clamp_domain"/>
</dbReference>
<dbReference type="PANTHER" id="PTHR19376">
    <property type="entry name" value="DNA-DIRECTED RNA POLYMERASE"/>
    <property type="match status" value="1"/>
</dbReference>
<dbReference type="PANTHER" id="PTHR19376:SF54">
    <property type="entry name" value="DNA-DIRECTED RNA POLYMERASE SUBUNIT BETA"/>
    <property type="match status" value="1"/>
</dbReference>
<dbReference type="Pfam" id="PF04997">
    <property type="entry name" value="RNA_pol_Rpb1_1"/>
    <property type="match status" value="1"/>
</dbReference>
<dbReference type="SUPFAM" id="SSF64484">
    <property type="entry name" value="beta and beta-prime subunits of DNA dependent RNA-polymerase"/>
    <property type="match status" value="1"/>
</dbReference>
<name>RPOC1_PROHO</name>
<reference key="1">
    <citation type="journal article" date="1992" name="Nature">
        <title>Multiple evolutionary origins of prochlorophytes, the chlorophyll b-containing prokaryotes.</title>
        <authorList>
            <person name="Palenik B."/>
            <person name="Haselkorn R."/>
        </authorList>
    </citation>
    <scope>NUCLEOTIDE SEQUENCE [GENOMIC DNA]</scope>
</reference>
<feature type="chain" id="PRO_0000067844" description="DNA-directed RNA polymerase subunit gamma">
    <location>
        <begin position="1" status="less than"/>
        <end position="203" status="greater than"/>
    </location>
</feature>
<feature type="binding site" evidence="2">
    <location>
        <position position="34"/>
    </location>
    <ligand>
        <name>Zn(2+)</name>
        <dbReference type="ChEBI" id="CHEBI:29105"/>
    </ligand>
</feature>
<feature type="binding site" evidence="2">
    <location>
        <position position="36"/>
    </location>
    <ligand>
        <name>Zn(2+)</name>
        <dbReference type="ChEBI" id="CHEBI:29105"/>
    </ligand>
</feature>
<feature type="binding site" evidence="2">
    <location>
        <position position="49"/>
    </location>
    <ligand>
        <name>Zn(2+)</name>
        <dbReference type="ChEBI" id="CHEBI:29105"/>
    </ligand>
</feature>
<feature type="binding site" evidence="2">
    <location>
        <position position="52"/>
    </location>
    <ligand>
        <name>Zn(2+)</name>
        <dbReference type="ChEBI" id="CHEBI:29105"/>
    </ligand>
</feature>
<feature type="non-terminal residue">
    <location>
        <position position="1"/>
    </location>
</feature>
<feature type="non-terminal residue">
    <location>
        <position position="203"/>
    </location>
</feature>
<keyword id="KW-0240">DNA-directed RNA polymerase</keyword>
<keyword id="KW-0479">Metal-binding</keyword>
<keyword id="KW-0548">Nucleotidyltransferase</keyword>
<keyword id="KW-0804">Transcription</keyword>
<keyword id="KW-0808">Transferase</keyword>
<keyword id="KW-0862">Zinc</keyword>
<accession>P42075</accession>
<protein>
    <recommendedName>
        <fullName>DNA-directed RNA polymerase subunit gamma</fullName>
        <shortName>RNAP subunit gamma</shortName>
        <ecNumber>2.7.7.6</ecNumber>
    </recommendedName>
    <alternativeName>
        <fullName>RNA polymerase subunit gamma</fullName>
    </alternativeName>
    <alternativeName>
        <fullName>Transcriptase subunit gamma</fullName>
    </alternativeName>
</protein>
<proteinExistence type="inferred from homology"/>
<sequence length="203" mass="23442">EVTKPETINYRTLKPEMDGLFCERIFGPAKDWECHCGKYKRVRHRGIVCERCGVEVTESRVRRHRMGYIKLAAPVTHVWYLKGIPSYISILLDMPLRDVEQIVYFNSYVVLDPGNHPELQTKQLLTEDQSMELEDQIYAEDSTLEGIEVGIGAEALERLLQDLELEQDAERLREEINSAKGQKRAKLIKRLRVVDNFVATGSH</sequence>
<organism>
    <name type="scientific">Prochlorothrix hollandica</name>
    <dbReference type="NCBI Taxonomy" id="1223"/>
    <lineage>
        <taxon>Bacteria</taxon>
        <taxon>Bacillati</taxon>
        <taxon>Cyanobacteriota</taxon>
        <taxon>Cyanophyceae</taxon>
        <taxon>Prochlorotrichales</taxon>
        <taxon>Prochlorotrichaceae</taxon>
        <taxon>Prochlorothrix</taxon>
    </lineage>
</organism>
<gene>
    <name type="primary">rpoC1</name>
</gene>